<protein>
    <recommendedName>
        <fullName evidence="1">Vitamin B12-binding protein</fullName>
    </recommendedName>
</protein>
<proteinExistence type="inferred from homology"/>
<accession>Q8CWD2</accession>
<gene>
    <name evidence="1" type="primary">btuF</name>
    <name type="ordered locus">c0194</name>
</gene>
<name>BTUF_ECOL6</name>
<dbReference type="EMBL" id="AE014075">
    <property type="protein sequence ID" value="AAN78688.1"/>
    <property type="molecule type" value="Genomic_DNA"/>
</dbReference>
<dbReference type="RefSeq" id="WP_001304480.1">
    <property type="nucleotide sequence ID" value="NZ_CP051263.1"/>
</dbReference>
<dbReference type="SMR" id="Q8CWD2"/>
<dbReference type="STRING" id="199310.c0194"/>
<dbReference type="KEGG" id="ecc:c0194"/>
<dbReference type="eggNOG" id="COG0614">
    <property type="taxonomic scope" value="Bacteria"/>
</dbReference>
<dbReference type="HOGENOM" id="CLU_038034_2_5_6"/>
<dbReference type="BioCyc" id="ECOL199310:C0194-MONOMER"/>
<dbReference type="Proteomes" id="UP000001410">
    <property type="component" value="Chromosome"/>
</dbReference>
<dbReference type="GO" id="GO:0042597">
    <property type="term" value="C:periplasmic space"/>
    <property type="evidence" value="ECO:0007669"/>
    <property type="project" value="UniProtKB-SubCell"/>
</dbReference>
<dbReference type="GO" id="GO:0031419">
    <property type="term" value="F:cobalamin binding"/>
    <property type="evidence" value="ECO:0007669"/>
    <property type="project" value="InterPro"/>
</dbReference>
<dbReference type="GO" id="GO:0015889">
    <property type="term" value="P:cobalamin transport"/>
    <property type="evidence" value="ECO:0007669"/>
    <property type="project" value="UniProtKB-UniRule"/>
</dbReference>
<dbReference type="CDD" id="cd01144">
    <property type="entry name" value="BtuF"/>
    <property type="match status" value="1"/>
</dbReference>
<dbReference type="FunFam" id="3.40.50.1980:FF:000007">
    <property type="entry name" value="Vitamin B12-binding protein"/>
    <property type="match status" value="1"/>
</dbReference>
<dbReference type="Gene3D" id="3.40.50.1980">
    <property type="entry name" value="Nitrogenase molybdenum iron protein domain"/>
    <property type="match status" value="2"/>
</dbReference>
<dbReference type="HAMAP" id="MF_01000">
    <property type="entry name" value="BtuF"/>
    <property type="match status" value="1"/>
</dbReference>
<dbReference type="InterPro" id="IPR050902">
    <property type="entry name" value="ABC_Transporter_SBP"/>
</dbReference>
<dbReference type="InterPro" id="IPR002491">
    <property type="entry name" value="ABC_transptr_periplasmic_BD"/>
</dbReference>
<dbReference type="InterPro" id="IPR023544">
    <property type="entry name" value="ABC_transptr_vit_B12-bd"/>
</dbReference>
<dbReference type="InterPro" id="IPR054828">
    <property type="entry name" value="Vit_B12_bind_prot"/>
</dbReference>
<dbReference type="NCBIfam" id="NF002894">
    <property type="entry name" value="PRK03379.1"/>
    <property type="match status" value="1"/>
</dbReference>
<dbReference type="NCBIfam" id="NF038402">
    <property type="entry name" value="TroA_like"/>
    <property type="match status" value="1"/>
</dbReference>
<dbReference type="PANTHER" id="PTHR30535:SF34">
    <property type="entry name" value="MOLYBDATE-BINDING PROTEIN MOLA"/>
    <property type="match status" value="1"/>
</dbReference>
<dbReference type="PANTHER" id="PTHR30535">
    <property type="entry name" value="VITAMIN B12-BINDING PROTEIN"/>
    <property type="match status" value="1"/>
</dbReference>
<dbReference type="Pfam" id="PF01497">
    <property type="entry name" value="Peripla_BP_2"/>
    <property type="match status" value="1"/>
</dbReference>
<dbReference type="SUPFAM" id="SSF53807">
    <property type="entry name" value="Helical backbone' metal receptor"/>
    <property type="match status" value="1"/>
</dbReference>
<dbReference type="PROSITE" id="PS50983">
    <property type="entry name" value="FE_B12_PBP"/>
    <property type="match status" value="1"/>
</dbReference>
<keyword id="KW-1015">Disulfide bond</keyword>
<keyword id="KW-0574">Periplasm</keyword>
<keyword id="KW-1185">Reference proteome</keyword>
<keyword id="KW-0732">Signal</keyword>
<keyword id="KW-0813">Transport</keyword>
<comment type="function">
    <text evidence="1">Part of the ABC transporter complex BtuCDF involved in vitamin B12 import. Binds vitamin B12 and delivers it to the periplasmic surface of BtuC.</text>
</comment>
<comment type="subunit">
    <text evidence="1">The complex is composed of two ATP-binding proteins (BtuD), two transmembrane proteins (BtuC) and a solute-binding protein (BtuF).</text>
</comment>
<comment type="subcellular location">
    <subcellularLocation>
        <location evidence="1">Periplasm</location>
    </subcellularLocation>
</comment>
<comment type="similarity">
    <text evidence="1">Belongs to the BtuF family.</text>
</comment>
<sequence>MAKSLFRALVALSFLAPLWLNAAPRVITLSPANTELAFAAGITPVGVSSYSDYPLQAQKIEQVSTWQGMNLERIVALKPDLVIAWRGGNAERQVDQLASLGIKVMWVDATSIEQIANALRQLAPWSPQPDKAEQAAQSLLDQYAQLKAQYADKPKKRVFLQFGINPPFTSGKESIQNQVLEVCGGENIFKDSRVPWPQVSREQVLARSPQAIVITGGPDQIPKIKQYWGEQLKIPVIPLTSDWFERASPRIILAAQQLCNALSQVD</sequence>
<organism>
    <name type="scientific">Escherichia coli O6:H1 (strain CFT073 / ATCC 700928 / UPEC)</name>
    <dbReference type="NCBI Taxonomy" id="199310"/>
    <lineage>
        <taxon>Bacteria</taxon>
        <taxon>Pseudomonadati</taxon>
        <taxon>Pseudomonadota</taxon>
        <taxon>Gammaproteobacteria</taxon>
        <taxon>Enterobacterales</taxon>
        <taxon>Enterobacteriaceae</taxon>
        <taxon>Escherichia</taxon>
    </lineage>
</organism>
<evidence type="ECO:0000255" key="1">
    <source>
        <dbReference type="HAMAP-Rule" id="MF_01000"/>
    </source>
</evidence>
<feature type="signal peptide" evidence="1">
    <location>
        <begin position="1"/>
        <end position="22"/>
    </location>
</feature>
<feature type="chain" id="PRO_0000003499" description="Vitamin B12-binding protein">
    <location>
        <begin position="23"/>
        <end position="266"/>
    </location>
</feature>
<feature type="domain" description="Fe/B12 periplasmic-binding" evidence="1">
    <location>
        <begin position="25"/>
        <end position="266"/>
    </location>
</feature>
<feature type="binding site" evidence="1">
    <location>
        <position position="50"/>
    </location>
    <ligand>
        <name>cyanocob(III)alamin</name>
        <dbReference type="ChEBI" id="CHEBI:17439"/>
    </ligand>
</feature>
<feature type="binding site" evidence="1">
    <location>
        <begin position="242"/>
        <end position="246"/>
    </location>
    <ligand>
        <name>cyanocob(III)alamin</name>
        <dbReference type="ChEBI" id="CHEBI:17439"/>
    </ligand>
</feature>
<feature type="site" description="Important for BtuC binding" evidence="1">
    <location>
        <position position="72"/>
    </location>
</feature>
<feature type="site" description="Important for BtuC binding" evidence="1">
    <location>
        <position position="202"/>
    </location>
</feature>
<feature type="disulfide bond" evidence="1">
    <location>
        <begin position="183"/>
        <end position="259"/>
    </location>
</feature>
<reference key="1">
    <citation type="journal article" date="2002" name="Proc. Natl. Acad. Sci. U.S.A.">
        <title>Extensive mosaic structure revealed by the complete genome sequence of uropathogenic Escherichia coli.</title>
        <authorList>
            <person name="Welch R.A."/>
            <person name="Burland V."/>
            <person name="Plunkett G. III"/>
            <person name="Redford P."/>
            <person name="Roesch P."/>
            <person name="Rasko D."/>
            <person name="Buckles E.L."/>
            <person name="Liou S.-R."/>
            <person name="Boutin A."/>
            <person name="Hackett J."/>
            <person name="Stroud D."/>
            <person name="Mayhew G.F."/>
            <person name="Rose D.J."/>
            <person name="Zhou S."/>
            <person name="Schwartz D.C."/>
            <person name="Perna N.T."/>
            <person name="Mobley H.L.T."/>
            <person name="Donnenberg M.S."/>
            <person name="Blattner F.R."/>
        </authorList>
    </citation>
    <scope>NUCLEOTIDE SEQUENCE [LARGE SCALE GENOMIC DNA]</scope>
    <source>
        <strain>CFT073 / ATCC 700928 / UPEC</strain>
    </source>
</reference>